<keyword id="KW-0378">Hydrolase</keyword>
<keyword id="KW-0479">Metal-binding</keyword>
<keyword id="KW-0665">Pyrimidine biosynthesis</keyword>
<keyword id="KW-0862">Zinc</keyword>
<evidence type="ECO:0000255" key="1">
    <source>
        <dbReference type="HAMAP-Rule" id="MF_00220"/>
    </source>
</evidence>
<protein>
    <recommendedName>
        <fullName evidence="1">Dihydroorotase</fullName>
        <shortName evidence="1">DHOase</shortName>
        <ecNumber evidence="1">3.5.2.3</ecNumber>
    </recommendedName>
</protein>
<accession>Q047M6</accession>
<dbReference type="EC" id="3.5.2.3" evidence="1"/>
<dbReference type="EMBL" id="CP000412">
    <property type="protein sequence ID" value="ABJ59346.1"/>
    <property type="molecule type" value="Genomic_DNA"/>
</dbReference>
<dbReference type="RefSeq" id="WP_011678672.1">
    <property type="nucleotide sequence ID" value="NC_008529.1"/>
</dbReference>
<dbReference type="SMR" id="Q047M6"/>
<dbReference type="KEGG" id="lbu:LBUL_1952"/>
<dbReference type="HOGENOM" id="CLU_015572_1_0_9"/>
<dbReference type="BioCyc" id="LDEL321956:LBUL_RS09220-MONOMER"/>
<dbReference type="UniPathway" id="UPA00070">
    <property type="reaction ID" value="UER00117"/>
</dbReference>
<dbReference type="GO" id="GO:0005737">
    <property type="term" value="C:cytoplasm"/>
    <property type="evidence" value="ECO:0007669"/>
    <property type="project" value="TreeGrafter"/>
</dbReference>
<dbReference type="GO" id="GO:0004038">
    <property type="term" value="F:allantoinase activity"/>
    <property type="evidence" value="ECO:0007669"/>
    <property type="project" value="TreeGrafter"/>
</dbReference>
<dbReference type="GO" id="GO:0004151">
    <property type="term" value="F:dihydroorotase activity"/>
    <property type="evidence" value="ECO:0007669"/>
    <property type="project" value="UniProtKB-UniRule"/>
</dbReference>
<dbReference type="GO" id="GO:0008270">
    <property type="term" value="F:zinc ion binding"/>
    <property type="evidence" value="ECO:0007669"/>
    <property type="project" value="UniProtKB-UniRule"/>
</dbReference>
<dbReference type="GO" id="GO:0044205">
    <property type="term" value="P:'de novo' UMP biosynthetic process"/>
    <property type="evidence" value="ECO:0007669"/>
    <property type="project" value="UniProtKB-UniRule"/>
</dbReference>
<dbReference type="GO" id="GO:0006145">
    <property type="term" value="P:purine nucleobase catabolic process"/>
    <property type="evidence" value="ECO:0007669"/>
    <property type="project" value="TreeGrafter"/>
</dbReference>
<dbReference type="CDD" id="cd01317">
    <property type="entry name" value="DHOase_IIa"/>
    <property type="match status" value="1"/>
</dbReference>
<dbReference type="Gene3D" id="3.20.20.140">
    <property type="entry name" value="Metal-dependent hydrolases"/>
    <property type="match status" value="1"/>
</dbReference>
<dbReference type="HAMAP" id="MF_00220_B">
    <property type="entry name" value="PyrC_classI_B"/>
    <property type="match status" value="1"/>
</dbReference>
<dbReference type="InterPro" id="IPR006680">
    <property type="entry name" value="Amidohydro-rel"/>
</dbReference>
<dbReference type="InterPro" id="IPR004722">
    <property type="entry name" value="DHOase"/>
</dbReference>
<dbReference type="InterPro" id="IPR050138">
    <property type="entry name" value="DHOase/Allantoinase_Hydrolase"/>
</dbReference>
<dbReference type="InterPro" id="IPR002195">
    <property type="entry name" value="Dihydroorotase_CS"/>
</dbReference>
<dbReference type="InterPro" id="IPR011059">
    <property type="entry name" value="Metal-dep_hydrolase_composite"/>
</dbReference>
<dbReference type="InterPro" id="IPR032466">
    <property type="entry name" value="Metal_Hydrolase"/>
</dbReference>
<dbReference type="NCBIfam" id="NF006837">
    <property type="entry name" value="PRK09357.1-2"/>
    <property type="match status" value="1"/>
</dbReference>
<dbReference type="NCBIfam" id="TIGR00857">
    <property type="entry name" value="pyrC_multi"/>
    <property type="match status" value="1"/>
</dbReference>
<dbReference type="PANTHER" id="PTHR43668">
    <property type="entry name" value="ALLANTOINASE"/>
    <property type="match status" value="1"/>
</dbReference>
<dbReference type="PANTHER" id="PTHR43668:SF2">
    <property type="entry name" value="ALLANTOINASE"/>
    <property type="match status" value="1"/>
</dbReference>
<dbReference type="Pfam" id="PF01979">
    <property type="entry name" value="Amidohydro_1"/>
    <property type="match status" value="1"/>
</dbReference>
<dbReference type="SUPFAM" id="SSF51338">
    <property type="entry name" value="Composite domain of metallo-dependent hydrolases"/>
    <property type="match status" value="1"/>
</dbReference>
<dbReference type="SUPFAM" id="SSF51556">
    <property type="entry name" value="Metallo-dependent hydrolases"/>
    <property type="match status" value="1"/>
</dbReference>
<dbReference type="PROSITE" id="PS00483">
    <property type="entry name" value="DIHYDROOROTASE_2"/>
    <property type="match status" value="1"/>
</dbReference>
<sequence>MQTVIKNGTVYQNGRLIHADVLIEDQKIKAIGTDLTGDKVIDATGKLVSPGLVDVHVHYRDPGQTYKEDIETGSKAAAHGGFTTVGAMPNVTPVPDTPDLMKKMVQENKQKGIVHIFQYGPITKNETTDELPDYAALKKAGAFALSNDGHGVQTAQTMYLAMQEAKKNDLIVAAHAQDDSLFNHGIVNEGEKAKELNLPPVTELAETTQIARDLLLAEKTGVHYHICHVSTKTSVELVRIAKACGINVTCEAAPHHLLLTEDDIPKDNGYYKMNPPLRSKEDQVALLVGLLDGTIDLIATDHAPHAKQEKQGGMQNAAFGITGSETAFSTLYTKFVKEDKVFTLEQLLSWLSDQPAKVFGLKKAGVLEPGCPADVAIFDLEHETELKEKNYQSKGINTPFTGQKIYGATVMTMVDGEVVYQRGEK</sequence>
<organism>
    <name type="scientific">Lactobacillus delbrueckii subsp. bulgaricus (strain ATCC BAA-365 / Lb-18)</name>
    <dbReference type="NCBI Taxonomy" id="321956"/>
    <lineage>
        <taxon>Bacteria</taxon>
        <taxon>Bacillati</taxon>
        <taxon>Bacillota</taxon>
        <taxon>Bacilli</taxon>
        <taxon>Lactobacillales</taxon>
        <taxon>Lactobacillaceae</taxon>
        <taxon>Lactobacillus</taxon>
    </lineage>
</organism>
<comment type="function">
    <text evidence="1">Catalyzes the reversible cyclization of carbamoyl aspartate to dihydroorotate.</text>
</comment>
<comment type="catalytic activity">
    <reaction evidence="1">
        <text>(S)-dihydroorotate + H2O = N-carbamoyl-L-aspartate + H(+)</text>
        <dbReference type="Rhea" id="RHEA:24296"/>
        <dbReference type="ChEBI" id="CHEBI:15377"/>
        <dbReference type="ChEBI" id="CHEBI:15378"/>
        <dbReference type="ChEBI" id="CHEBI:30864"/>
        <dbReference type="ChEBI" id="CHEBI:32814"/>
        <dbReference type="EC" id="3.5.2.3"/>
    </reaction>
</comment>
<comment type="cofactor">
    <cofactor evidence="1">
        <name>Zn(2+)</name>
        <dbReference type="ChEBI" id="CHEBI:29105"/>
    </cofactor>
    <text evidence="1">Binds 2 Zn(2+) ions per subunit.</text>
</comment>
<comment type="pathway">
    <text evidence="1">Pyrimidine metabolism; UMP biosynthesis via de novo pathway; (S)-dihydroorotate from bicarbonate: step 3/3.</text>
</comment>
<comment type="similarity">
    <text evidence="1">Belongs to the metallo-dependent hydrolases superfamily. DHOase family. Class I DHOase subfamily.</text>
</comment>
<name>PYRC_LACDB</name>
<reference key="1">
    <citation type="journal article" date="2006" name="Proc. Natl. Acad. Sci. U.S.A.">
        <title>Comparative genomics of the lactic acid bacteria.</title>
        <authorList>
            <person name="Makarova K.S."/>
            <person name="Slesarev A."/>
            <person name="Wolf Y.I."/>
            <person name="Sorokin A."/>
            <person name="Mirkin B."/>
            <person name="Koonin E.V."/>
            <person name="Pavlov A."/>
            <person name="Pavlova N."/>
            <person name="Karamychev V."/>
            <person name="Polouchine N."/>
            <person name="Shakhova V."/>
            <person name="Grigoriev I."/>
            <person name="Lou Y."/>
            <person name="Rohksar D."/>
            <person name="Lucas S."/>
            <person name="Huang K."/>
            <person name="Goodstein D.M."/>
            <person name="Hawkins T."/>
            <person name="Plengvidhya V."/>
            <person name="Welker D."/>
            <person name="Hughes J."/>
            <person name="Goh Y."/>
            <person name="Benson A."/>
            <person name="Baldwin K."/>
            <person name="Lee J.-H."/>
            <person name="Diaz-Muniz I."/>
            <person name="Dosti B."/>
            <person name="Smeianov V."/>
            <person name="Wechter W."/>
            <person name="Barabote R."/>
            <person name="Lorca G."/>
            <person name="Altermann E."/>
            <person name="Barrangou R."/>
            <person name="Ganesan B."/>
            <person name="Xie Y."/>
            <person name="Rawsthorne H."/>
            <person name="Tamir D."/>
            <person name="Parker C."/>
            <person name="Breidt F."/>
            <person name="Broadbent J.R."/>
            <person name="Hutkins R."/>
            <person name="O'Sullivan D."/>
            <person name="Steele J."/>
            <person name="Unlu G."/>
            <person name="Saier M.H. Jr."/>
            <person name="Klaenhammer T."/>
            <person name="Richardson P."/>
            <person name="Kozyavkin S."/>
            <person name="Weimer B.C."/>
            <person name="Mills D.A."/>
        </authorList>
    </citation>
    <scope>NUCLEOTIDE SEQUENCE [LARGE SCALE GENOMIC DNA]</scope>
    <source>
        <strain>ATCC BAA-365 / Lb-18</strain>
    </source>
</reference>
<gene>
    <name evidence="1" type="primary">pyrC</name>
    <name type="ordered locus">LBUL_1952</name>
</gene>
<feature type="chain" id="PRO_1000024088" description="Dihydroorotase">
    <location>
        <begin position="1"/>
        <end position="425"/>
    </location>
</feature>
<feature type="active site" evidence="1">
    <location>
        <position position="301"/>
    </location>
</feature>
<feature type="binding site" evidence="1">
    <location>
        <position position="56"/>
    </location>
    <ligand>
        <name>Zn(2+)</name>
        <dbReference type="ChEBI" id="CHEBI:29105"/>
        <label>1</label>
    </ligand>
</feature>
<feature type="binding site" evidence="1">
    <location>
        <begin position="58"/>
        <end position="60"/>
    </location>
    <ligand>
        <name>substrate</name>
    </ligand>
</feature>
<feature type="binding site" evidence="1">
    <location>
        <position position="58"/>
    </location>
    <ligand>
        <name>Zn(2+)</name>
        <dbReference type="ChEBI" id="CHEBI:29105"/>
        <label>1</label>
    </ligand>
</feature>
<feature type="binding site" evidence="1">
    <location>
        <position position="90"/>
    </location>
    <ligand>
        <name>substrate</name>
    </ligand>
</feature>
<feature type="binding site" evidence="1">
    <location>
        <position position="148"/>
    </location>
    <ligand>
        <name>Zn(2+)</name>
        <dbReference type="ChEBI" id="CHEBI:29105"/>
        <label>1</label>
    </ligand>
</feature>
<feature type="binding site" evidence="1">
    <location>
        <position position="148"/>
    </location>
    <ligand>
        <name>Zn(2+)</name>
        <dbReference type="ChEBI" id="CHEBI:29105"/>
        <label>2</label>
    </ligand>
</feature>
<feature type="binding site" evidence="1">
    <location>
        <position position="175"/>
    </location>
    <ligand>
        <name>Zn(2+)</name>
        <dbReference type="ChEBI" id="CHEBI:29105"/>
        <label>2</label>
    </ligand>
</feature>
<feature type="binding site" evidence="1">
    <location>
        <position position="228"/>
    </location>
    <ligand>
        <name>Zn(2+)</name>
        <dbReference type="ChEBI" id="CHEBI:29105"/>
        <label>2</label>
    </ligand>
</feature>
<feature type="binding site" evidence="1">
    <location>
        <position position="274"/>
    </location>
    <ligand>
        <name>substrate</name>
    </ligand>
</feature>
<feature type="binding site" evidence="1">
    <location>
        <position position="301"/>
    </location>
    <ligand>
        <name>Zn(2+)</name>
        <dbReference type="ChEBI" id="CHEBI:29105"/>
        <label>1</label>
    </ligand>
</feature>
<feature type="binding site" evidence="1">
    <location>
        <position position="305"/>
    </location>
    <ligand>
        <name>substrate</name>
    </ligand>
</feature>
<feature type="binding site" evidence="1">
    <location>
        <begin position="319"/>
        <end position="320"/>
    </location>
    <ligand>
        <name>substrate</name>
    </ligand>
</feature>
<proteinExistence type="inferred from homology"/>